<proteinExistence type="evidence at protein level"/>
<protein>
    <recommendedName>
        <fullName evidence="3">ATP synthase F(0) complex subunit g, mitochondrial</fullName>
        <shortName>ATPase subunit g</shortName>
    </recommendedName>
    <alternativeName>
        <fullName evidence="3">ATP synthase membrane subunit g</fullName>
    </alternativeName>
</protein>
<gene>
    <name evidence="1" type="primary">Atp5mg</name>
    <name type="synonym">Atp5l</name>
</gene>
<keyword id="KW-0007">Acetylation</keyword>
<keyword id="KW-0066">ATP synthesis</keyword>
<keyword id="KW-0138">CF(0)</keyword>
<keyword id="KW-0903">Direct protein sequencing</keyword>
<keyword id="KW-0375">Hydrogen ion transport</keyword>
<keyword id="KW-0406">Ion transport</keyword>
<keyword id="KW-0472">Membrane</keyword>
<keyword id="KW-0496">Mitochondrion</keyword>
<keyword id="KW-0999">Mitochondrion inner membrane</keyword>
<keyword id="KW-1185">Reference proteome</keyword>
<keyword id="KW-0813">Transport</keyword>
<accession>Q9CPQ8</accession>
<accession>O70590</accession>
<accession>Q5M9M8</accession>
<evidence type="ECO:0000250" key="1">
    <source>
        <dbReference type="UniProtKB" id="O75964"/>
    </source>
</evidence>
<evidence type="ECO:0000250" key="2">
    <source>
        <dbReference type="UniProtKB" id="P19483"/>
    </source>
</evidence>
<evidence type="ECO:0000305" key="3"/>
<evidence type="ECO:0007744" key="4">
    <source>
    </source>
</evidence>
<name>ATP5L_MOUSE</name>
<sequence length="103" mass="11425">MAKFIRNFAEKAPSMVAAAVTYSKPRLATFWHYAKVELVPPTPAEIPTAIQSVKKIIQSAKTGSFKHLTVKEAVLNGLVATEVWMWFYIGEIIGKRGIVGYDV</sequence>
<reference key="1">
    <citation type="journal article" date="1999" name="Biosci. Biotechnol. Biochem.">
        <title>Sequence of a cDNA encoding mouse F1F0-ATP synthase g subunit.</title>
        <authorList>
            <person name="Baik M."/>
            <person name="Jeon D."/>
            <person name="Kim H."/>
        </authorList>
    </citation>
    <scope>NUCLEOTIDE SEQUENCE [MRNA]</scope>
    <source>
        <strain>ICR</strain>
        <tissue>Mammary gland</tissue>
    </source>
</reference>
<reference key="2">
    <citation type="journal article" date="2005" name="Science">
        <title>The transcriptional landscape of the mammalian genome.</title>
        <authorList>
            <person name="Carninci P."/>
            <person name="Kasukawa T."/>
            <person name="Katayama S."/>
            <person name="Gough J."/>
            <person name="Frith M.C."/>
            <person name="Maeda N."/>
            <person name="Oyama R."/>
            <person name="Ravasi T."/>
            <person name="Lenhard B."/>
            <person name="Wells C."/>
            <person name="Kodzius R."/>
            <person name="Shimokawa K."/>
            <person name="Bajic V.B."/>
            <person name="Brenner S.E."/>
            <person name="Batalov S."/>
            <person name="Forrest A.R."/>
            <person name="Zavolan M."/>
            <person name="Davis M.J."/>
            <person name="Wilming L.G."/>
            <person name="Aidinis V."/>
            <person name="Allen J.E."/>
            <person name="Ambesi-Impiombato A."/>
            <person name="Apweiler R."/>
            <person name="Aturaliya R.N."/>
            <person name="Bailey T.L."/>
            <person name="Bansal M."/>
            <person name="Baxter L."/>
            <person name="Beisel K.W."/>
            <person name="Bersano T."/>
            <person name="Bono H."/>
            <person name="Chalk A.M."/>
            <person name="Chiu K.P."/>
            <person name="Choudhary V."/>
            <person name="Christoffels A."/>
            <person name="Clutterbuck D.R."/>
            <person name="Crowe M.L."/>
            <person name="Dalla E."/>
            <person name="Dalrymple B.P."/>
            <person name="de Bono B."/>
            <person name="Della Gatta G."/>
            <person name="di Bernardo D."/>
            <person name="Down T."/>
            <person name="Engstrom P."/>
            <person name="Fagiolini M."/>
            <person name="Faulkner G."/>
            <person name="Fletcher C.F."/>
            <person name="Fukushima T."/>
            <person name="Furuno M."/>
            <person name="Futaki S."/>
            <person name="Gariboldi M."/>
            <person name="Georgii-Hemming P."/>
            <person name="Gingeras T.R."/>
            <person name="Gojobori T."/>
            <person name="Green R.E."/>
            <person name="Gustincich S."/>
            <person name="Harbers M."/>
            <person name="Hayashi Y."/>
            <person name="Hensch T.K."/>
            <person name="Hirokawa N."/>
            <person name="Hill D."/>
            <person name="Huminiecki L."/>
            <person name="Iacono M."/>
            <person name="Ikeo K."/>
            <person name="Iwama A."/>
            <person name="Ishikawa T."/>
            <person name="Jakt M."/>
            <person name="Kanapin A."/>
            <person name="Katoh M."/>
            <person name="Kawasawa Y."/>
            <person name="Kelso J."/>
            <person name="Kitamura H."/>
            <person name="Kitano H."/>
            <person name="Kollias G."/>
            <person name="Krishnan S.P."/>
            <person name="Kruger A."/>
            <person name="Kummerfeld S.K."/>
            <person name="Kurochkin I.V."/>
            <person name="Lareau L.F."/>
            <person name="Lazarevic D."/>
            <person name="Lipovich L."/>
            <person name="Liu J."/>
            <person name="Liuni S."/>
            <person name="McWilliam S."/>
            <person name="Madan Babu M."/>
            <person name="Madera M."/>
            <person name="Marchionni L."/>
            <person name="Matsuda H."/>
            <person name="Matsuzawa S."/>
            <person name="Miki H."/>
            <person name="Mignone F."/>
            <person name="Miyake S."/>
            <person name="Morris K."/>
            <person name="Mottagui-Tabar S."/>
            <person name="Mulder N."/>
            <person name="Nakano N."/>
            <person name="Nakauchi H."/>
            <person name="Ng P."/>
            <person name="Nilsson R."/>
            <person name="Nishiguchi S."/>
            <person name="Nishikawa S."/>
            <person name="Nori F."/>
            <person name="Ohara O."/>
            <person name="Okazaki Y."/>
            <person name="Orlando V."/>
            <person name="Pang K.C."/>
            <person name="Pavan W.J."/>
            <person name="Pavesi G."/>
            <person name="Pesole G."/>
            <person name="Petrovsky N."/>
            <person name="Piazza S."/>
            <person name="Reed J."/>
            <person name="Reid J.F."/>
            <person name="Ring B.Z."/>
            <person name="Ringwald M."/>
            <person name="Rost B."/>
            <person name="Ruan Y."/>
            <person name="Salzberg S.L."/>
            <person name="Sandelin A."/>
            <person name="Schneider C."/>
            <person name="Schoenbach C."/>
            <person name="Sekiguchi K."/>
            <person name="Semple C.A."/>
            <person name="Seno S."/>
            <person name="Sessa L."/>
            <person name="Sheng Y."/>
            <person name="Shibata Y."/>
            <person name="Shimada H."/>
            <person name="Shimada K."/>
            <person name="Silva D."/>
            <person name="Sinclair B."/>
            <person name="Sperling S."/>
            <person name="Stupka E."/>
            <person name="Sugiura K."/>
            <person name="Sultana R."/>
            <person name="Takenaka Y."/>
            <person name="Taki K."/>
            <person name="Tammoja K."/>
            <person name="Tan S.L."/>
            <person name="Tang S."/>
            <person name="Taylor M.S."/>
            <person name="Tegner J."/>
            <person name="Teichmann S.A."/>
            <person name="Ueda H.R."/>
            <person name="van Nimwegen E."/>
            <person name="Verardo R."/>
            <person name="Wei C.L."/>
            <person name="Yagi K."/>
            <person name="Yamanishi H."/>
            <person name="Zabarovsky E."/>
            <person name="Zhu S."/>
            <person name="Zimmer A."/>
            <person name="Hide W."/>
            <person name="Bult C."/>
            <person name="Grimmond S.M."/>
            <person name="Teasdale R.D."/>
            <person name="Liu E.T."/>
            <person name="Brusic V."/>
            <person name="Quackenbush J."/>
            <person name="Wahlestedt C."/>
            <person name="Mattick J.S."/>
            <person name="Hume D.A."/>
            <person name="Kai C."/>
            <person name="Sasaki D."/>
            <person name="Tomaru Y."/>
            <person name="Fukuda S."/>
            <person name="Kanamori-Katayama M."/>
            <person name="Suzuki M."/>
            <person name="Aoki J."/>
            <person name="Arakawa T."/>
            <person name="Iida J."/>
            <person name="Imamura K."/>
            <person name="Itoh M."/>
            <person name="Kato T."/>
            <person name="Kawaji H."/>
            <person name="Kawagashira N."/>
            <person name="Kawashima T."/>
            <person name="Kojima M."/>
            <person name="Kondo S."/>
            <person name="Konno H."/>
            <person name="Nakano K."/>
            <person name="Ninomiya N."/>
            <person name="Nishio T."/>
            <person name="Okada M."/>
            <person name="Plessy C."/>
            <person name="Shibata K."/>
            <person name="Shiraki T."/>
            <person name="Suzuki S."/>
            <person name="Tagami M."/>
            <person name="Waki K."/>
            <person name="Watahiki A."/>
            <person name="Okamura-Oho Y."/>
            <person name="Suzuki H."/>
            <person name="Kawai J."/>
            <person name="Hayashizaki Y."/>
        </authorList>
    </citation>
    <scope>NUCLEOTIDE SEQUENCE [LARGE SCALE MRNA]</scope>
    <source>
        <strain>C57BL/6J</strain>
        <tissue>Cerebellum</tissue>
        <tissue>Hippocampus</tissue>
        <tissue>Liver</tissue>
        <tissue>Small intestine</tissue>
        <tissue>Tongue</tissue>
    </source>
</reference>
<reference key="3">
    <citation type="journal article" date="2004" name="Genome Res.">
        <title>The status, quality, and expansion of the NIH full-length cDNA project: the Mammalian Gene Collection (MGC).</title>
        <authorList>
            <consortium name="The MGC Project Team"/>
        </authorList>
    </citation>
    <scope>NUCLEOTIDE SEQUENCE [LARGE SCALE MRNA]</scope>
    <source>
        <strain>FVB/N</strain>
        <tissue>Kidney</tissue>
        <tissue>Mammary tumor</tissue>
    </source>
</reference>
<reference key="4">
    <citation type="submission" date="2007-04" db="UniProtKB">
        <authorList>
            <person name="Lubec G."/>
            <person name="Kang S.U."/>
        </authorList>
    </citation>
    <scope>PROTEIN SEQUENCE OF 12-54</scope>
    <scope>IDENTIFICATION BY MASS SPECTROMETRY</scope>
    <source>
        <strain>C57BL/6J</strain>
        <tissue>Brain</tissue>
    </source>
</reference>
<reference key="5">
    <citation type="journal article" date="2010" name="Cell">
        <title>A tissue-specific atlas of mouse protein phosphorylation and expression.</title>
        <authorList>
            <person name="Huttlin E.L."/>
            <person name="Jedrychowski M.P."/>
            <person name="Elias J.E."/>
            <person name="Goswami T."/>
            <person name="Rad R."/>
            <person name="Beausoleil S.A."/>
            <person name="Villen J."/>
            <person name="Haas W."/>
            <person name="Sowa M.E."/>
            <person name="Gygi S.P."/>
        </authorList>
    </citation>
    <scope>IDENTIFICATION BY MASS SPECTROMETRY [LARGE SCALE ANALYSIS]</scope>
    <source>
        <tissue>Brain</tissue>
        <tissue>Brown adipose tissue</tissue>
        <tissue>Heart</tissue>
        <tissue>Kidney</tissue>
        <tissue>Liver</tissue>
        <tissue>Lung</tissue>
        <tissue>Pancreas</tissue>
        <tissue>Spleen</tissue>
        <tissue>Testis</tissue>
    </source>
</reference>
<reference key="6">
    <citation type="journal article" date="2013" name="Proc. Natl. Acad. Sci. U.S.A.">
        <title>Label-free quantitative proteomics of the lysine acetylome in mitochondria identifies substrates of SIRT3 in metabolic pathways.</title>
        <authorList>
            <person name="Rardin M.J."/>
            <person name="Newman J.C."/>
            <person name="Held J.M."/>
            <person name="Cusack M.P."/>
            <person name="Sorensen D.J."/>
            <person name="Li B."/>
            <person name="Schilling B."/>
            <person name="Mooney S.D."/>
            <person name="Kahn C.R."/>
            <person name="Verdin E."/>
            <person name="Gibson B.W."/>
        </authorList>
    </citation>
    <scope>ACETYLATION [LARGE SCALE ANALYSIS] AT LYS-11; LYS-35 AND LYS-54</scope>
    <scope>IDENTIFICATION BY MASS SPECTROMETRY [LARGE SCALE ANALYSIS]</scope>
    <source>
        <tissue>Liver</tissue>
    </source>
</reference>
<feature type="initiator methionine" description="Removed" evidence="1">
    <location>
        <position position="1"/>
    </location>
</feature>
<feature type="chain" id="PRO_0000071692" description="ATP synthase F(0) complex subunit g, mitochondrial">
    <location>
        <begin position="2"/>
        <end position="103"/>
    </location>
</feature>
<feature type="modified residue" description="N-acetylalanine" evidence="1">
    <location>
        <position position="2"/>
    </location>
</feature>
<feature type="modified residue" description="N6-acetyllysine" evidence="4">
    <location>
        <position position="11"/>
    </location>
</feature>
<feature type="modified residue" description="N6-acetyllysine" evidence="1">
    <location>
        <position position="24"/>
    </location>
</feature>
<feature type="modified residue" description="N6-acetyllysine" evidence="4">
    <location>
        <position position="35"/>
    </location>
</feature>
<feature type="modified residue" description="N6-acetyllysine" evidence="4">
    <location>
        <position position="54"/>
    </location>
</feature>
<feature type="sequence conflict" description="In Ref. 1; CAA76699." evidence="3" ref="1">
    <original>I</original>
    <variation>M</variation>
    <location>
        <position position="56"/>
    </location>
</feature>
<dbReference type="EMBL" id="Y17223">
    <property type="protein sequence ID" value="CAA76699.1"/>
    <property type="molecule type" value="mRNA"/>
</dbReference>
<dbReference type="EMBL" id="AK005175">
    <property type="protein sequence ID" value="BAB23862.1"/>
    <property type="molecule type" value="mRNA"/>
</dbReference>
<dbReference type="EMBL" id="AK005321">
    <property type="protein sequence ID" value="BAB23952.1"/>
    <property type="molecule type" value="mRNA"/>
</dbReference>
<dbReference type="EMBL" id="AK005380">
    <property type="protein sequence ID" value="BAB23987.1"/>
    <property type="molecule type" value="mRNA"/>
</dbReference>
<dbReference type="EMBL" id="AK008002">
    <property type="protein sequence ID" value="BAB25401.1"/>
    <property type="molecule type" value="mRNA"/>
</dbReference>
<dbReference type="EMBL" id="AK008012">
    <property type="protein sequence ID" value="BAB25408.1"/>
    <property type="molecule type" value="mRNA"/>
</dbReference>
<dbReference type="EMBL" id="AK008030">
    <property type="protein sequence ID" value="BAB25420.1"/>
    <property type="molecule type" value="mRNA"/>
</dbReference>
<dbReference type="EMBL" id="AK008087">
    <property type="protein sequence ID" value="BAB25451.1"/>
    <property type="molecule type" value="mRNA"/>
</dbReference>
<dbReference type="EMBL" id="AK008183">
    <property type="protein sequence ID" value="BAB25516.1"/>
    <property type="molecule type" value="mRNA"/>
</dbReference>
<dbReference type="EMBL" id="AK008251">
    <property type="protein sequence ID" value="BAB25558.1"/>
    <property type="molecule type" value="mRNA"/>
</dbReference>
<dbReference type="EMBL" id="AK008321">
    <property type="protein sequence ID" value="BAB25600.1"/>
    <property type="molecule type" value="mRNA"/>
</dbReference>
<dbReference type="EMBL" id="AK009465">
    <property type="protein sequence ID" value="BAB26305.1"/>
    <property type="molecule type" value="mRNA"/>
</dbReference>
<dbReference type="EMBL" id="AK009468">
    <property type="protein sequence ID" value="BAB26308.1"/>
    <property type="molecule type" value="mRNA"/>
</dbReference>
<dbReference type="EMBL" id="AK009471">
    <property type="protein sequence ID" value="BAB26310.1"/>
    <property type="molecule type" value="mRNA"/>
</dbReference>
<dbReference type="EMBL" id="AK009612">
    <property type="protein sequence ID" value="BAB26392.1"/>
    <property type="molecule type" value="mRNA"/>
</dbReference>
<dbReference type="EMBL" id="AK009806">
    <property type="protein sequence ID" value="BAB26514.1"/>
    <property type="molecule type" value="mRNA"/>
</dbReference>
<dbReference type="EMBL" id="AK011038">
    <property type="protein sequence ID" value="BAB27351.1"/>
    <property type="molecule type" value="mRNA"/>
</dbReference>
<dbReference type="EMBL" id="AK011046">
    <property type="protein sequence ID" value="BAB27357.1"/>
    <property type="molecule type" value="mRNA"/>
</dbReference>
<dbReference type="EMBL" id="AK011099">
    <property type="protein sequence ID" value="BAB27396.1"/>
    <property type="molecule type" value="mRNA"/>
</dbReference>
<dbReference type="EMBL" id="AK019252">
    <property type="protein sequence ID" value="BAB31628.1"/>
    <property type="molecule type" value="mRNA"/>
</dbReference>
<dbReference type="EMBL" id="AK019274">
    <property type="protein sequence ID" value="BAB31641.1"/>
    <property type="molecule type" value="mRNA"/>
</dbReference>
<dbReference type="EMBL" id="AK019320">
    <property type="protein sequence ID" value="BAB31664.1"/>
    <property type="molecule type" value="mRNA"/>
</dbReference>
<dbReference type="EMBL" id="AK019343">
    <property type="protein sequence ID" value="BAB31670.1"/>
    <property type="molecule type" value="mRNA"/>
</dbReference>
<dbReference type="EMBL" id="AK019350">
    <property type="protein sequence ID" value="BAB31672.1"/>
    <property type="molecule type" value="mRNA"/>
</dbReference>
<dbReference type="EMBL" id="AK019355">
    <property type="protein sequence ID" value="BAB31676.1"/>
    <property type="molecule type" value="mRNA"/>
</dbReference>
<dbReference type="EMBL" id="BC031384">
    <property type="protein sequence ID" value="AAH31384.1"/>
    <property type="molecule type" value="mRNA"/>
</dbReference>
<dbReference type="EMBL" id="BC086880">
    <property type="protein sequence ID" value="AAH86880.1"/>
    <property type="molecule type" value="mRNA"/>
</dbReference>
<dbReference type="EMBL" id="BC089555">
    <property type="protein sequence ID" value="AAH89555.1"/>
    <property type="molecule type" value="mRNA"/>
</dbReference>
<dbReference type="EMBL" id="BC094407">
    <property type="protein sequence ID" value="AAH94407.1"/>
    <property type="molecule type" value="mRNA"/>
</dbReference>
<dbReference type="CCDS" id="CCDS40604.1"/>
<dbReference type="RefSeq" id="NP_038823.2">
    <property type="nucleotide sequence ID" value="NM_013795.5"/>
</dbReference>
<dbReference type="RefSeq" id="XP_036010936.1">
    <property type="nucleotide sequence ID" value="XM_036155043.1"/>
</dbReference>
<dbReference type="SMR" id="Q9CPQ8"/>
<dbReference type="BioGRID" id="205227">
    <property type="interactions" value="73"/>
</dbReference>
<dbReference type="FunCoup" id="Q9CPQ8">
    <property type="interactions" value="1386"/>
</dbReference>
<dbReference type="IntAct" id="Q9CPQ8">
    <property type="interactions" value="3"/>
</dbReference>
<dbReference type="MINT" id="Q9CPQ8"/>
<dbReference type="STRING" id="10090.ENSMUSP00000047960"/>
<dbReference type="GlyGen" id="Q9CPQ8">
    <property type="glycosylation" value="3 sites, 1 O-linked glycan (2 sites)"/>
</dbReference>
<dbReference type="iPTMnet" id="Q9CPQ8"/>
<dbReference type="PhosphoSitePlus" id="Q9CPQ8"/>
<dbReference type="SwissPalm" id="Q9CPQ8"/>
<dbReference type="jPOST" id="Q9CPQ8"/>
<dbReference type="PaxDb" id="10090-ENSMUSP00000047960"/>
<dbReference type="PeptideAtlas" id="Q9CPQ8"/>
<dbReference type="ProteomicsDB" id="277090"/>
<dbReference type="Pumba" id="Q9CPQ8"/>
<dbReference type="TopDownProteomics" id="Q9CPQ8"/>
<dbReference type="DNASU" id="27425"/>
<dbReference type="Ensembl" id="ENSMUST00000043675.9">
    <property type="protein sequence ID" value="ENSMUSP00000047960.8"/>
    <property type="gene ID" value="ENSMUSG00000038717.10"/>
</dbReference>
<dbReference type="GeneID" id="27425"/>
<dbReference type="KEGG" id="mmu:27425"/>
<dbReference type="UCSC" id="uc009per.2">
    <property type="organism name" value="mouse"/>
</dbReference>
<dbReference type="AGR" id="MGI:1351597"/>
<dbReference type="CTD" id="10632"/>
<dbReference type="MGI" id="MGI:1351597">
    <property type="gene designation" value="Atp5mg"/>
</dbReference>
<dbReference type="VEuPathDB" id="HostDB:ENSMUSG00000038717"/>
<dbReference type="eggNOG" id="KOG4103">
    <property type="taxonomic scope" value="Eukaryota"/>
</dbReference>
<dbReference type="GeneTree" id="ENSGT00390000009724"/>
<dbReference type="HOGENOM" id="CLU_152793_1_1_1"/>
<dbReference type="InParanoid" id="Q9CPQ8"/>
<dbReference type="OMA" id="TEVCMWF"/>
<dbReference type="OrthoDB" id="437at2759"/>
<dbReference type="PhylomeDB" id="Q9CPQ8"/>
<dbReference type="TreeFam" id="TF313978"/>
<dbReference type="Reactome" id="R-MMU-163210">
    <property type="pathway name" value="Formation of ATP by chemiosmotic coupling"/>
</dbReference>
<dbReference type="Reactome" id="R-MMU-8949613">
    <property type="pathway name" value="Cristae formation"/>
</dbReference>
<dbReference type="Reactome" id="R-MMU-9837999">
    <property type="pathway name" value="Mitochondrial protein degradation"/>
</dbReference>
<dbReference type="BioGRID-ORCS" id="27425">
    <property type="hits" value="14 hits in 78 CRISPR screens"/>
</dbReference>
<dbReference type="ChiTaRS" id="Atp5l">
    <property type="organism name" value="mouse"/>
</dbReference>
<dbReference type="PRO" id="PR:Q9CPQ8"/>
<dbReference type="Proteomes" id="UP000000589">
    <property type="component" value="Chromosome 9"/>
</dbReference>
<dbReference type="RNAct" id="Q9CPQ8">
    <property type="molecule type" value="protein"/>
</dbReference>
<dbReference type="Bgee" id="ENSMUSG00000038717">
    <property type="expression patterns" value="Expressed in quadriceps femoris and 88 other cell types or tissues"/>
</dbReference>
<dbReference type="GO" id="GO:0005743">
    <property type="term" value="C:mitochondrial inner membrane"/>
    <property type="evidence" value="ECO:0007005"/>
    <property type="project" value="MGI"/>
</dbReference>
<dbReference type="GO" id="GO:0005739">
    <property type="term" value="C:mitochondrion"/>
    <property type="evidence" value="ECO:0007005"/>
    <property type="project" value="MGI"/>
</dbReference>
<dbReference type="GO" id="GO:0045259">
    <property type="term" value="C:proton-transporting ATP synthase complex"/>
    <property type="evidence" value="ECO:0000250"/>
    <property type="project" value="UniProtKB"/>
</dbReference>
<dbReference type="GO" id="GO:0008553">
    <property type="term" value="F:P-type proton-exporting transporter activity"/>
    <property type="evidence" value="ECO:0000266"/>
    <property type="project" value="MGI"/>
</dbReference>
<dbReference type="GO" id="GO:0015986">
    <property type="term" value="P:proton motive force-driven ATP synthesis"/>
    <property type="evidence" value="ECO:0000266"/>
    <property type="project" value="MGI"/>
</dbReference>
<dbReference type="InterPro" id="IPR006808">
    <property type="entry name" value="ATP_synth_F0_gsu_mt"/>
</dbReference>
<dbReference type="InterPro" id="IPR016702">
    <property type="entry name" value="ATP_synth_su_G_mt_met"/>
</dbReference>
<dbReference type="PANTHER" id="PTHR12386">
    <property type="entry name" value="ATP SYNTHASE SUBUNIT"/>
    <property type="match status" value="1"/>
</dbReference>
<dbReference type="Pfam" id="PF04718">
    <property type="entry name" value="ATP-synt_G"/>
    <property type="match status" value="1"/>
</dbReference>
<dbReference type="PIRSF" id="PIRSF017835">
    <property type="entry name" value="ATP-synth_g_mitoch_animal"/>
    <property type="match status" value="1"/>
</dbReference>
<comment type="function">
    <text evidence="1 2">Subunit g, of the mitochondrial membrane ATP synthase complex (F(1)F(0) ATP synthase or Complex V) that produces ATP from ADP in the presence of a proton gradient across the membrane which is generated by electron transport complexes of the respiratory chain. ATP synthase complex consist of a soluble F(1) head domain - the catalytic core - and a membrane F(1) domain - the membrane proton channel. These two domains are linked by a central stalk rotating inside the F(1) region and a stationary peripheral stalk. During catalysis, ATP synthesis in the catalytic domain of F(1) is coupled via a rotary mechanism of the central stalk subunits to proton translocation (By similarity). In vivo, can only synthesize ATP although its ATP hydrolase activity can be activated artificially in vitro (By similarity). Part of the complex F(0) domain (By similarity).</text>
</comment>
<comment type="subunit">
    <text evidence="1">Component of the ATP synthase complex composed at least of ATP5F1A/subunit alpha, ATP5F1B/subunit beta, ATP5MC1/subunit c (homooctomer), MT-ATP6/subunit a, MT-ATP8/subunit 8, ATP5ME/subunit e, ATP5MF/subunit f, ATP5MG/subunit g, ATP5MK/subunit k, ATP5MJ/subunit j, ATP5F1C/subunit gamma, ATP5F1D/subunit delta, ATP5F1E/subunit epsilon, ATP5PF/subunit F6, ATP5PB/subunit b, ATP5PD/subunit d, ATP5PO/subunit OSCP. ATP synthase complex consists of a soluble F(1) head domain (subunits alpha(3) and beta(3)) - the catalytic core - and a membrane F(0) domain - the membrane proton channel (subunits c, a, 8, e, f, g, k and j). These two domains are linked by a central stalk (subunits gamma, delta, and epsilon) rotating inside the F1 region and a stationary peripheral stalk (subunits F6, b, d, and OSCP).</text>
</comment>
<comment type="subcellular location">
    <subcellularLocation>
        <location>Mitochondrion</location>
    </subcellularLocation>
    <subcellularLocation>
        <location>Mitochondrion inner membrane</location>
    </subcellularLocation>
</comment>
<comment type="similarity">
    <text evidence="3">Belongs to the ATPase g subunit family.</text>
</comment>
<organism>
    <name type="scientific">Mus musculus</name>
    <name type="common">Mouse</name>
    <dbReference type="NCBI Taxonomy" id="10090"/>
    <lineage>
        <taxon>Eukaryota</taxon>
        <taxon>Metazoa</taxon>
        <taxon>Chordata</taxon>
        <taxon>Craniata</taxon>
        <taxon>Vertebrata</taxon>
        <taxon>Euteleostomi</taxon>
        <taxon>Mammalia</taxon>
        <taxon>Eutheria</taxon>
        <taxon>Euarchontoglires</taxon>
        <taxon>Glires</taxon>
        <taxon>Rodentia</taxon>
        <taxon>Myomorpha</taxon>
        <taxon>Muroidea</taxon>
        <taxon>Muridae</taxon>
        <taxon>Murinae</taxon>
        <taxon>Mus</taxon>
        <taxon>Mus</taxon>
    </lineage>
</organism>